<protein>
    <recommendedName>
        <fullName>Apolipoprotein L domain-containing protein 1</fullName>
    </recommendedName>
    <alternativeName>
        <fullName>Vascular early response gene protein</fullName>
    </alternativeName>
</protein>
<gene>
    <name type="primary">Apold1</name>
    <name type="synonym">Verge</name>
</gene>
<name>APLD1_RAT</name>
<reference key="1">
    <citation type="journal article" date="2004" name="J. Neurosci.">
        <title>Verge: a novel vascular early response gene.</title>
        <authorList>
            <person name="Regard J.B."/>
            <person name="Scheek S."/>
            <person name="Borbiev T."/>
            <person name="Lanahan A.A."/>
            <person name="Schneider A."/>
            <person name="Demetriades A.-M."/>
            <person name="Hiemisch H."/>
            <person name="Barnes C.A."/>
            <person name="Verin A.D."/>
            <person name="Worley P.F."/>
        </authorList>
    </citation>
    <scope>NUCLEOTIDE SEQUENCE [MRNA]</scope>
    <scope>FUNCTION</scope>
    <scope>INDUCTION</scope>
    <scope>TISSUE SPECIFICITY</scope>
    <scope>DEVELOPMENTAL STAGE</scope>
    <source>
        <strain>Sprague-Dawley</strain>
        <tissue>Brain</tissue>
    </source>
</reference>
<dbReference type="EMBL" id="AY673969">
    <property type="protein sequence ID" value="AAT78358.1"/>
    <property type="molecule type" value="mRNA"/>
</dbReference>
<dbReference type="RefSeq" id="NP_001003403.1">
    <property type="nucleotide sequence ID" value="NM_001003403.2"/>
</dbReference>
<dbReference type="RefSeq" id="XP_038963933.1">
    <property type="nucleotide sequence ID" value="XM_039108005.2"/>
</dbReference>
<dbReference type="RefSeq" id="XP_038963934.1">
    <property type="nucleotide sequence ID" value="XM_039108006.2"/>
</dbReference>
<dbReference type="FunCoup" id="Q6B959">
    <property type="interactions" value="311"/>
</dbReference>
<dbReference type="STRING" id="10116.ENSRNOP00000010289"/>
<dbReference type="PhosphoSitePlus" id="Q6B959"/>
<dbReference type="PaxDb" id="10116-ENSRNOP00000010289"/>
<dbReference type="Ensembl" id="ENSRNOT00000010289.5">
    <property type="protein sequence ID" value="ENSRNOP00000010289.4"/>
    <property type="gene ID" value="ENSRNOG00000007830.5"/>
</dbReference>
<dbReference type="GeneID" id="444983"/>
<dbReference type="KEGG" id="rno:444983"/>
<dbReference type="UCSC" id="RGD:1303123">
    <property type="organism name" value="rat"/>
</dbReference>
<dbReference type="AGR" id="RGD:1303123"/>
<dbReference type="CTD" id="81575"/>
<dbReference type="RGD" id="1303123">
    <property type="gene designation" value="Apold1"/>
</dbReference>
<dbReference type="eggNOG" id="ENOG502S2T4">
    <property type="taxonomic scope" value="Eukaryota"/>
</dbReference>
<dbReference type="GeneTree" id="ENSGT01030000234599"/>
<dbReference type="HOGENOM" id="CLU_086689_0_0_1"/>
<dbReference type="InParanoid" id="Q6B959"/>
<dbReference type="OMA" id="AMDEVCE"/>
<dbReference type="PhylomeDB" id="Q6B959"/>
<dbReference type="TreeFam" id="TF334681"/>
<dbReference type="PRO" id="PR:Q6B959"/>
<dbReference type="Proteomes" id="UP000002494">
    <property type="component" value="Chromosome 4"/>
</dbReference>
<dbReference type="Bgee" id="ENSRNOG00000007830">
    <property type="expression patterns" value="Expressed in heart and 18 other cell types or tissues"/>
</dbReference>
<dbReference type="GO" id="GO:0005911">
    <property type="term" value="C:cell-cell junction"/>
    <property type="evidence" value="ECO:0000250"/>
    <property type="project" value="UniProtKB"/>
</dbReference>
<dbReference type="GO" id="GO:0005576">
    <property type="term" value="C:extracellular region"/>
    <property type="evidence" value="ECO:0007669"/>
    <property type="project" value="InterPro"/>
</dbReference>
<dbReference type="GO" id="GO:0005886">
    <property type="term" value="C:plasma membrane"/>
    <property type="evidence" value="ECO:0007669"/>
    <property type="project" value="UniProtKB-SubCell"/>
</dbReference>
<dbReference type="GO" id="GO:0030133">
    <property type="term" value="C:transport vesicle"/>
    <property type="evidence" value="ECO:0007669"/>
    <property type="project" value="UniProtKB-SubCell"/>
</dbReference>
<dbReference type="GO" id="GO:0033093">
    <property type="term" value="C:Weibel-Palade body"/>
    <property type="evidence" value="ECO:0000250"/>
    <property type="project" value="UniProtKB"/>
</dbReference>
<dbReference type="GO" id="GO:0008289">
    <property type="term" value="F:lipid binding"/>
    <property type="evidence" value="ECO:0000318"/>
    <property type="project" value="GO_Central"/>
</dbReference>
<dbReference type="GO" id="GO:0001525">
    <property type="term" value="P:angiogenesis"/>
    <property type="evidence" value="ECO:0000270"/>
    <property type="project" value="RGD"/>
</dbReference>
<dbReference type="GO" id="GO:0160192">
    <property type="term" value="P:autophagosome-dependent secretion"/>
    <property type="evidence" value="ECO:0000250"/>
    <property type="project" value="UniProtKB"/>
</dbReference>
<dbReference type="GO" id="GO:0042118">
    <property type="term" value="P:endothelial cell activation"/>
    <property type="evidence" value="ECO:0000270"/>
    <property type="project" value="RGD"/>
</dbReference>
<dbReference type="GO" id="GO:0006869">
    <property type="term" value="P:lipid transport"/>
    <property type="evidence" value="ECO:0007669"/>
    <property type="project" value="InterPro"/>
</dbReference>
<dbReference type="GO" id="GO:0042157">
    <property type="term" value="P:lipoprotein metabolic process"/>
    <property type="evidence" value="ECO:0007669"/>
    <property type="project" value="InterPro"/>
</dbReference>
<dbReference type="GO" id="GO:0045601">
    <property type="term" value="P:regulation of endothelial cell differentiation"/>
    <property type="evidence" value="ECO:0000270"/>
    <property type="project" value="RGD"/>
</dbReference>
<dbReference type="GO" id="GO:0090559">
    <property type="term" value="P:regulation of membrane permeability"/>
    <property type="evidence" value="ECO:0000250"/>
    <property type="project" value="UniProtKB"/>
</dbReference>
<dbReference type="GO" id="GO:0001666">
    <property type="term" value="P:response to hypoxia"/>
    <property type="evidence" value="ECO:0000270"/>
    <property type="project" value="RGD"/>
</dbReference>
<dbReference type="InterPro" id="IPR008405">
    <property type="entry name" value="ApoL"/>
</dbReference>
<dbReference type="PANTHER" id="PTHR14096">
    <property type="entry name" value="APOLIPOPROTEIN L"/>
    <property type="match status" value="1"/>
</dbReference>
<dbReference type="PANTHER" id="PTHR14096:SF1">
    <property type="entry name" value="APOLIPOPROTEIN L DOMAIN-CONTAINING PROTEIN 1"/>
    <property type="match status" value="1"/>
</dbReference>
<dbReference type="Pfam" id="PF05461">
    <property type="entry name" value="ApoL"/>
    <property type="match status" value="1"/>
</dbReference>
<proteinExistence type="evidence at protein level"/>
<accession>Q6B959</accession>
<feature type="chain" id="PRO_0000247276" description="Apolipoprotein L domain-containing protein 1">
    <location>
        <begin position="1"/>
        <end position="246"/>
    </location>
</feature>
<feature type="transmembrane region" description="Helical" evidence="2">
    <location>
        <begin position="50"/>
        <end position="72"/>
    </location>
</feature>
<feature type="transmembrane region" description="Helical" evidence="2">
    <location>
        <begin position="89"/>
        <end position="109"/>
    </location>
</feature>
<feature type="coiled-coil region" evidence="2">
    <location>
        <begin position="193"/>
        <end position="220"/>
    </location>
</feature>
<keyword id="KW-0965">Cell junction</keyword>
<keyword id="KW-1003">Cell membrane</keyword>
<keyword id="KW-0175">Coiled coil</keyword>
<keyword id="KW-0968">Cytoplasmic vesicle</keyword>
<keyword id="KW-0472">Membrane</keyword>
<keyword id="KW-1185">Reference proteome</keyword>
<keyword id="KW-0812">Transmembrane</keyword>
<keyword id="KW-1133">Transmembrane helix</keyword>
<organism>
    <name type="scientific">Rattus norvegicus</name>
    <name type="common">Rat</name>
    <dbReference type="NCBI Taxonomy" id="10116"/>
    <lineage>
        <taxon>Eukaryota</taxon>
        <taxon>Metazoa</taxon>
        <taxon>Chordata</taxon>
        <taxon>Craniata</taxon>
        <taxon>Vertebrata</taxon>
        <taxon>Euteleostomi</taxon>
        <taxon>Mammalia</taxon>
        <taxon>Eutheria</taxon>
        <taxon>Euarchontoglires</taxon>
        <taxon>Glires</taxon>
        <taxon>Rodentia</taxon>
        <taxon>Myomorpha</taxon>
        <taxon>Muroidea</taxon>
        <taxon>Muridae</taxon>
        <taxon>Murinae</taxon>
        <taxon>Rattus</taxon>
    </lineage>
</organism>
<comment type="function">
    <text evidence="1 3">Is a modulator of endothelial barrier permeability, required for proper organization of endothelial cell-cell junctions and cytoskeleton. It also plays a role in the modulation of secretory autophagy (By similarity). May affect blood-brain barrier permeability.</text>
</comment>
<comment type="subcellular location">
    <subcellularLocation>
        <location evidence="1">Cell membrane</location>
        <topology evidence="1">Multi-pass membrane protein</topology>
    </subcellularLocation>
    <subcellularLocation>
        <location evidence="1">Cell junction</location>
    </subcellularLocation>
    <subcellularLocation>
        <location evidence="1">Cytoplasmic vesicle</location>
        <location evidence="1">Secretory vesicle</location>
    </subcellularLocation>
    <text evidence="1">Localized to Weibel-Palade bodies, secretory granules characteristic of vascular endothelial cells.</text>
</comment>
<comment type="tissue specificity">
    <text evidence="3">Present at low levels in brain vascular cells (at protein level).</text>
</comment>
<comment type="developmental stage">
    <text evidence="3">Expressed at high levels in vessels from developing heart from 12 dpc to P12. Expression decreases markedly from P12 to P17, and is no longer detectable at P30.</text>
</comment>
<comment type="induction">
    <text evidence="3">In the brain, by electrical or chemical seizures (at protein level).</text>
</comment>
<comment type="similarity">
    <text evidence="4">Belongs to the apolipoprotein L family.</text>
</comment>
<evidence type="ECO:0000250" key="1">
    <source>
        <dbReference type="UniProtKB" id="Q96LR9"/>
    </source>
</evidence>
<evidence type="ECO:0000255" key="2"/>
<evidence type="ECO:0000269" key="3">
    <source>
    </source>
</evidence>
<evidence type="ECO:0000305" key="4"/>
<sequence>MEKWTAWEPQGADALRRFQGLLLDRRGRLHCQVLRLREVARRLERLRRRSLAANVAGSSLSAAGALAAIVGLSLSPVTLGASLVASAVGLGVATAGGAVTITSDLSLIFCNSREVRRVQEIAATCQDQMRELLSCLEFFCQWQGRGDRQLLQSGRDASMALYNSVYFIVFFGSRGFLIPRRAEGATKVSQAVLKAKIQKLSESLESCTGALDELSEQLESRVQLCTKAGRGHNLRNSPDLDAALFF</sequence>